<sequence length="370" mass="42037">MPVLSTTHRLPLSVERERNREDDSLTNLQWLQDFSILSTDLSSIANSRPPVPRVSQGPCSPPAGDTASCQAPRTGKQRVTVPTAWASLPTLSPSPVQEVDYRTNANVKPPYSYATLICMAMEASQQRKLTLSAIYNWITQNFCYYRHADPSWQNSIRHNLSLNKCFMKVPRGKDEPGKGGFWQMDPRYADMFVNGVLKRRRMPSSHLDPPRCNKTIGHHPYLPVSRPGSHHMQHISGGHRQSRRYEKPNPVLPAFRAPERQGDTLFTPEDPLQGSNFDDLDLQAALISMCWEGDLAASNLNSTLTGNSGMDMNQQDPPMQDNHWYLSTEGQQTWEQVKEEPVVEQWYSETGFVEDVLYECPPWERVETLL</sequence>
<gene>
    <name evidence="1" type="primary">foxj1.2</name>
</gene>
<proteinExistence type="evidence at transcript level"/>
<keyword id="KW-0010">Activator</keyword>
<keyword id="KW-0970">Cilium biogenesis/degradation</keyword>
<keyword id="KW-0238">DNA-binding</keyword>
<keyword id="KW-0539">Nucleus</keyword>
<keyword id="KW-1185">Reference proteome</keyword>
<keyword id="KW-0804">Transcription</keyword>
<keyword id="KW-0805">Transcription regulation</keyword>
<feature type="chain" id="PRO_0000250445" description="Forkhead box protein J1.2">
    <location>
        <begin position="1"/>
        <end position="370"/>
    </location>
</feature>
<feature type="DNA-binding region" description="Fork-head" evidence="3 4">
    <location>
        <begin position="108"/>
        <end position="202"/>
    </location>
</feature>
<feature type="region of interest" description="Disordered" evidence="5">
    <location>
        <begin position="45"/>
        <end position="74"/>
    </location>
</feature>
<feature type="region of interest" description="Disordered" evidence="5">
    <location>
        <begin position="227"/>
        <end position="246"/>
    </location>
</feature>
<reference evidence="7" key="1">
    <citation type="submission" date="2005-11" db="EMBL/GenBank/DDBJ databases">
        <authorList>
            <consortium name="NIH - Xenopus Gene Collection (XGC) project"/>
        </authorList>
    </citation>
    <scope>NUCLEOTIDE SEQUENCE [LARGE SCALE MRNA]</scope>
    <source>
        <tissue evidence="7">Testis</tissue>
    </source>
</reference>
<comment type="function">
    <text evidence="2">Key transcription factor required for motile ciliogenesis. Activates genes essential for motile cilia formation and function.</text>
</comment>
<comment type="subcellular location">
    <subcellularLocation>
        <location evidence="3 6">Nucleus</location>
    </subcellularLocation>
</comment>
<comment type="similarity">
    <text evidence="6">Belongs to the FOXJ1 family.</text>
</comment>
<protein>
    <recommendedName>
        <fullName>Forkhead box protein J1.2</fullName>
        <shortName>FoxJ1.2</shortName>
    </recommendedName>
</protein>
<dbReference type="EMBL" id="BC108616">
    <property type="protein sequence ID" value="AAI08617.1"/>
    <property type="molecule type" value="mRNA"/>
</dbReference>
<dbReference type="SMR" id="Q32NH9"/>
<dbReference type="DNASU" id="734957"/>
<dbReference type="KEGG" id="xla:734957"/>
<dbReference type="AGR" id="Xenbase:XB-GENE-919747"/>
<dbReference type="CTD" id="734957"/>
<dbReference type="Xenbase" id="XB-GENE-919747">
    <property type="gene designation" value="foxj1.2.L"/>
</dbReference>
<dbReference type="OrthoDB" id="5954824at2759"/>
<dbReference type="Proteomes" id="UP000186698">
    <property type="component" value="Chromosome 9_10L"/>
</dbReference>
<dbReference type="Bgee" id="734957">
    <property type="expression patterns" value="Expressed in testis and 10 other cell types or tissues"/>
</dbReference>
<dbReference type="GO" id="GO:0005634">
    <property type="term" value="C:nucleus"/>
    <property type="evidence" value="ECO:0000250"/>
    <property type="project" value="UniProtKB"/>
</dbReference>
<dbReference type="GO" id="GO:0000981">
    <property type="term" value="F:DNA-binding transcription factor activity, RNA polymerase II-specific"/>
    <property type="evidence" value="ECO:0000318"/>
    <property type="project" value="GO_Central"/>
</dbReference>
<dbReference type="GO" id="GO:0000978">
    <property type="term" value="F:RNA polymerase II cis-regulatory region sequence-specific DNA binding"/>
    <property type="evidence" value="ECO:0000318"/>
    <property type="project" value="GO_Central"/>
</dbReference>
<dbReference type="GO" id="GO:0060271">
    <property type="term" value="P:cilium assembly"/>
    <property type="evidence" value="ECO:0000250"/>
    <property type="project" value="UniProtKB"/>
</dbReference>
<dbReference type="GO" id="GO:0006357">
    <property type="term" value="P:regulation of transcription by RNA polymerase II"/>
    <property type="evidence" value="ECO:0000318"/>
    <property type="project" value="GO_Central"/>
</dbReference>
<dbReference type="CDD" id="cd20023">
    <property type="entry name" value="FH_FOXJ1"/>
    <property type="match status" value="1"/>
</dbReference>
<dbReference type="FunFam" id="1.10.10.10:FF:000030">
    <property type="entry name" value="Forkhead box protein K2"/>
    <property type="match status" value="1"/>
</dbReference>
<dbReference type="Gene3D" id="1.10.10.10">
    <property type="entry name" value="Winged helix-like DNA-binding domain superfamily/Winged helix DNA-binding domain"/>
    <property type="match status" value="1"/>
</dbReference>
<dbReference type="InterPro" id="IPR047512">
    <property type="entry name" value="FH_FOXJ1"/>
</dbReference>
<dbReference type="InterPro" id="IPR001766">
    <property type="entry name" value="Fork_head_dom"/>
</dbReference>
<dbReference type="InterPro" id="IPR047513">
    <property type="entry name" value="FOXJ1"/>
</dbReference>
<dbReference type="InterPro" id="IPR018122">
    <property type="entry name" value="TF_fork_head_CS_1"/>
</dbReference>
<dbReference type="InterPro" id="IPR030456">
    <property type="entry name" value="TF_fork_head_CS_2"/>
</dbReference>
<dbReference type="InterPro" id="IPR036388">
    <property type="entry name" value="WH-like_DNA-bd_sf"/>
</dbReference>
<dbReference type="InterPro" id="IPR036390">
    <property type="entry name" value="WH_DNA-bd_sf"/>
</dbReference>
<dbReference type="PANTHER" id="PTHR46805">
    <property type="entry name" value="FORKHEAD BOX PROTEIN J1"/>
    <property type="match status" value="1"/>
</dbReference>
<dbReference type="PANTHER" id="PTHR46805:SF4">
    <property type="entry name" value="FORKHEAD BOX PROTEIN J1.2"/>
    <property type="match status" value="1"/>
</dbReference>
<dbReference type="Pfam" id="PF00250">
    <property type="entry name" value="Forkhead"/>
    <property type="match status" value="1"/>
</dbReference>
<dbReference type="PRINTS" id="PR00053">
    <property type="entry name" value="FORKHEAD"/>
</dbReference>
<dbReference type="SMART" id="SM00339">
    <property type="entry name" value="FH"/>
    <property type="match status" value="1"/>
</dbReference>
<dbReference type="SUPFAM" id="SSF46785">
    <property type="entry name" value="Winged helix' DNA-binding domain"/>
    <property type="match status" value="1"/>
</dbReference>
<dbReference type="PROSITE" id="PS00657">
    <property type="entry name" value="FORK_HEAD_1"/>
    <property type="match status" value="1"/>
</dbReference>
<dbReference type="PROSITE" id="PS00658">
    <property type="entry name" value="FORK_HEAD_2"/>
    <property type="match status" value="1"/>
</dbReference>
<dbReference type="PROSITE" id="PS50039">
    <property type="entry name" value="FORK_HEAD_3"/>
    <property type="match status" value="1"/>
</dbReference>
<accession>Q32NH9</accession>
<organism>
    <name type="scientific">Xenopus laevis</name>
    <name type="common">African clawed frog</name>
    <dbReference type="NCBI Taxonomy" id="8355"/>
    <lineage>
        <taxon>Eukaryota</taxon>
        <taxon>Metazoa</taxon>
        <taxon>Chordata</taxon>
        <taxon>Craniata</taxon>
        <taxon>Vertebrata</taxon>
        <taxon>Euteleostomi</taxon>
        <taxon>Amphibia</taxon>
        <taxon>Batrachia</taxon>
        <taxon>Anura</taxon>
        <taxon>Pipoidea</taxon>
        <taxon>Pipidae</taxon>
        <taxon>Xenopodinae</taxon>
        <taxon>Xenopus</taxon>
        <taxon>Xenopus</taxon>
    </lineage>
</organism>
<evidence type="ECO:0000250" key="1">
    <source>
        <dbReference type="UniProtKB" id="Q66IG8"/>
    </source>
</evidence>
<evidence type="ECO:0000250" key="2">
    <source>
        <dbReference type="UniProtKB" id="Q708W2"/>
    </source>
</evidence>
<evidence type="ECO:0000255" key="3"/>
<evidence type="ECO:0000255" key="4">
    <source>
        <dbReference type="PROSITE-ProRule" id="PRU00089"/>
    </source>
</evidence>
<evidence type="ECO:0000256" key="5">
    <source>
        <dbReference type="SAM" id="MobiDB-lite"/>
    </source>
</evidence>
<evidence type="ECO:0000305" key="6"/>
<evidence type="ECO:0000312" key="7">
    <source>
        <dbReference type="EMBL" id="AAI08617.1"/>
    </source>
</evidence>
<name>FXJ12_XENLA</name>